<sequence>MSKSRLTVFSFVRRFLLLLMVVLAVFWGGGIALFSVAPVPFSAVMVERQVSAWLHGNFRYVAHSDWVSMDQISPWMGLAVIAAEDQKFSEHWGFDVASIEKALAHNERNENRIRGASTISQQTAKNLFLWDGRSWVRKGLEAGLTLGIETVWSKKRILTVYLNIAEFGDGVFGVEAAAQRYFHKPASKLTRSEAALLAAVLPNPLRFKVSSPSGYVRSRQAWILRQMYQLGGEPFMQQHQLD</sequence>
<proteinExistence type="inferred from homology"/>
<feature type="chain" id="PRO_0000257694" description="Biosynthetic peptidoglycan transglycosylase">
    <location>
        <begin position="1"/>
        <end position="242"/>
    </location>
</feature>
<feature type="transmembrane region" description="Helical" evidence="1">
    <location>
        <begin position="15"/>
        <end position="35"/>
    </location>
</feature>
<evidence type="ECO:0000255" key="1">
    <source>
        <dbReference type="HAMAP-Rule" id="MF_00766"/>
    </source>
</evidence>
<organism>
    <name type="scientific">Shigella sonnei (strain Ss046)</name>
    <dbReference type="NCBI Taxonomy" id="300269"/>
    <lineage>
        <taxon>Bacteria</taxon>
        <taxon>Pseudomonadati</taxon>
        <taxon>Pseudomonadota</taxon>
        <taxon>Gammaproteobacteria</taxon>
        <taxon>Enterobacterales</taxon>
        <taxon>Enterobacteriaceae</taxon>
        <taxon>Shigella</taxon>
    </lineage>
</organism>
<name>MTGA_SHISS</name>
<keyword id="KW-0997">Cell inner membrane</keyword>
<keyword id="KW-1003">Cell membrane</keyword>
<keyword id="KW-0133">Cell shape</keyword>
<keyword id="KW-0961">Cell wall biogenesis/degradation</keyword>
<keyword id="KW-0328">Glycosyltransferase</keyword>
<keyword id="KW-0472">Membrane</keyword>
<keyword id="KW-0573">Peptidoglycan synthesis</keyword>
<keyword id="KW-1185">Reference proteome</keyword>
<keyword id="KW-0808">Transferase</keyword>
<keyword id="KW-0812">Transmembrane</keyword>
<keyword id="KW-1133">Transmembrane helix</keyword>
<gene>
    <name evidence="1" type="primary">mtgA</name>
    <name type="ordered locus">SSON_3356</name>
</gene>
<dbReference type="EC" id="2.4.99.28" evidence="1"/>
<dbReference type="EMBL" id="CP000038">
    <property type="protein sequence ID" value="AAZ89929.1"/>
    <property type="molecule type" value="Genomic_DNA"/>
</dbReference>
<dbReference type="RefSeq" id="WP_000047067.1">
    <property type="nucleotide sequence ID" value="NC_007384.1"/>
</dbReference>
<dbReference type="SMR" id="Q3YX33"/>
<dbReference type="CAZy" id="GT51">
    <property type="family name" value="Glycosyltransferase Family 51"/>
</dbReference>
<dbReference type="KEGG" id="ssn:SSON_3356"/>
<dbReference type="HOGENOM" id="CLU_006354_1_1_6"/>
<dbReference type="UniPathway" id="UPA00219"/>
<dbReference type="Proteomes" id="UP000002529">
    <property type="component" value="Chromosome"/>
</dbReference>
<dbReference type="GO" id="GO:0009274">
    <property type="term" value="C:peptidoglycan-based cell wall"/>
    <property type="evidence" value="ECO:0007669"/>
    <property type="project" value="InterPro"/>
</dbReference>
<dbReference type="GO" id="GO:0005886">
    <property type="term" value="C:plasma membrane"/>
    <property type="evidence" value="ECO:0007669"/>
    <property type="project" value="UniProtKB-SubCell"/>
</dbReference>
<dbReference type="GO" id="GO:0016763">
    <property type="term" value="F:pentosyltransferase activity"/>
    <property type="evidence" value="ECO:0007669"/>
    <property type="project" value="InterPro"/>
</dbReference>
<dbReference type="GO" id="GO:0008955">
    <property type="term" value="F:peptidoglycan glycosyltransferase activity"/>
    <property type="evidence" value="ECO:0007669"/>
    <property type="project" value="UniProtKB-UniRule"/>
</dbReference>
<dbReference type="GO" id="GO:0071555">
    <property type="term" value="P:cell wall organization"/>
    <property type="evidence" value="ECO:0007669"/>
    <property type="project" value="UniProtKB-KW"/>
</dbReference>
<dbReference type="GO" id="GO:0009252">
    <property type="term" value="P:peptidoglycan biosynthetic process"/>
    <property type="evidence" value="ECO:0007669"/>
    <property type="project" value="UniProtKB-UniRule"/>
</dbReference>
<dbReference type="GO" id="GO:0008360">
    <property type="term" value="P:regulation of cell shape"/>
    <property type="evidence" value="ECO:0007669"/>
    <property type="project" value="UniProtKB-KW"/>
</dbReference>
<dbReference type="FunFam" id="1.10.3810.10:FF:000004">
    <property type="entry name" value="Biosynthetic peptidoglycan transglycosylase"/>
    <property type="match status" value="1"/>
</dbReference>
<dbReference type="Gene3D" id="1.10.3810.10">
    <property type="entry name" value="Biosynthetic peptidoglycan transglycosylase-like"/>
    <property type="match status" value="1"/>
</dbReference>
<dbReference type="HAMAP" id="MF_00766">
    <property type="entry name" value="PGT_MtgA"/>
    <property type="match status" value="1"/>
</dbReference>
<dbReference type="InterPro" id="IPR001264">
    <property type="entry name" value="Glyco_trans_51"/>
</dbReference>
<dbReference type="InterPro" id="IPR023346">
    <property type="entry name" value="Lysozyme-like_dom_sf"/>
</dbReference>
<dbReference type="InterPro" id="IPR036950">
    <property type="entry name" value="PBP_transglycosylase"/>
</dbReference>
<dbReference type="InterPro" id="IPR011812">
    <property type="entry name" value="Pep_trsgly"/>
</dbReference>
<dbReference type="NCBIfam" id="TIGR02070">
    <property type="entry name" value="mono_pep_trsgly"/>
    <property type="match status" value="1"/>
</dbReference>
<dbReference type="PANTHER" id="PTHR30400:SF0">
    <property type="entry name" value="BIOSYNTHETIC PEPTIDOGLYCAN TRANSGLYCOSYLASE"/>
    <property type="match status" value="1"/>
</dbReference>
<dbReference type="PANTHER" id="PTHR30400">
    <property type="entry name" value="MONOFUNCTIONAL BIOSYNTHETIC PEPTIDOGLYCAN TRANSGLYCOSYLASE"/>
    <property type="match status" value="1"/>
</dbReference>
<dbReference type="Pfam" id="PF00912">
    <property type="entry name" value="Transgly"/>
    <property type="match status" value="1"/>
</dbReference>
<dbReference type="SUPFAM" id="SSF53955">
    <property type="entry name" value="Lysozyme-like"/>
    <property type="match status" value="1"/>
</dbReference>
<accession>Q3YX33</accession>
<comment type="function">
    <text evidence="1">Peptidoglycan polymerase that catalyzes glycan chain elongation from lipid-linked precursors.</text>
</comment>
<comment type="catalytic activity">
    <reaction evidence="1">
        <text>[GlcNAc-(1-&gt;4)-Mur2Ac(oyl-L-Ala-gamma-D-Glu-L-Lys-D-Ala-D-Ala)](n)-di-trans,octa-cis-undecaprenyl diphosphate + beta-D-GlcNAc-(1-&gt;4)-Mur2Ac(oyl-L-Ala-gamma-D-Glu-L-Lys-D-Ala-D-Ala)-di-trans,octa-cis-undecaprenyl diphosphate = [GlcNAc-(1-&gt;4)-Mur2Ac(oyl-L-Ala-gamma-D-Glu-L-Lys-D-Ala-D-Ala)](n+1)-di-trans,octa-cis-undecaprenyl diphosphate + di-trans,octa-cis-undecaprenyl diphosphate + H(+)</text>
        <dbReference type="Rhea" id="RHEA:23708"/>
        <dbReference type="Rhea" id="RHEA-COMP:9602"/>
        <dbReference type="Rhea" id="RHEA-COMP:9603"/>
        <dbReference type="ChEBI" id="CHEBI:15378"/>
        <dbReference type="ChEBI" id="CHEBI:58405"/>
        <dbReference type="ChEBI" id="CHEBI:60033"/>
        <dbReference type="ChEBI" id="CHEBI:78435"/>
        <dbReference type="EC" id="2.4.99.28"/>
    </reaction>
</comment>
<comment type="pathway">
    <text evidence="1">Cell wall biogenesis; peptidoglycan biosynthesis.</text>
</comment>
<comment type="subcellular location">
    <subcellularLocation>
        <location evidence="1">Cell inner membrane</location>
        <topology evidence="1">Single-pass membrane protein</topology>
    </subcellularLocation>
</comment>
<comment type="similarity">
    <text evidence="1">Belongs to the glycosyltransferase 51 family.</text>
</comment>
<reference key="1">
    <citation type="journal article" date="2005" name="Nucleic Acids Res.">
        <title>Genome dynamics and diversity of Shigella species, the etiologic agents of bacillary dysentery.</title>
        <authorList>
            <person name="Yang F."/>
            <person name="Yang J."/>
            <person name="Zhang X."/>
            <person name="Chen L."/>
            <person name="Jiang Y."/>
            <person name="Yan Y."/>
            <person name="Tang X."/>
            <person name="Wang J."/>
            <person name="Xiong Z."/>
            <person name="Dong J."/>
            <person name="Xue Y."/>
            <person name="Zhu Y."/>
            <person name="Xu X."/>
            <person name="Sun L."/>
            <person name="Chen S."/>
            <person name="Nie H."/>
            <person name="Peng J."/>
            <person name="Xu J."/>
            <person name="Wang Y."/>
            <person name="Yuan Z."/>
            <person name="Wen Y."/>
            <person name="Yao Z."/>
            <person name="Shen Y."/>
            <person name="Qiang B."/>
            <person name="Hou Y."/>
            <person name="Yu J."/>
            <person name="Jin Q."/>
        </authorList>
    </citation>
    <scope>NUCLEOTIDE SEQUENCE [LARGE SCALE GENOMIC DNA]</scope>
    <source>
        <strain>Ss046</strain>
    </source>
</reference>
<protein>
    <recommendedName>
        <fullName evidence="1">Biosynthetic peptidoglycan transglycosylase</fullName>
        <ecNumber evidence="1">2.4.99.28</ecNumber>
    </recommendedName>
    <alternativeName>
        <fullName evidence="1">Glycan polymerase</fullName>
    </alternativeName>
    <alternativeName>
        <fullName evidence="1">Peptidoglycan glycosyltransferase MtgA</fullName>
        <shortName evidence="1">PGT</shortName>
    </alternativeName>
</protein>